<sequence>MSRVAKAPVVVPAGVDVKINGQVITIKGKNGELTRTLNDAVEVKHADNTLTFGPRDGYADGWAQAGTARALLNSMVIGVTEGFTKKLQLVGVGYRAAVKGNVINLSLGFSHPVDHQLPAGITAECPTQTEIVLKGADKQVIGQVAADLRAYRRPEPYKGKGVRYADEVVRTKEAKKK</sequence>
<reference key="1">
    <citation type="journal article" date="2001" name="Nature">
        <title>Genome sequence of enterohaemorrhagic Escherichia coli O157:H7.</title>
        <authorList>
            <person name="Perna N.T."/>
            <person name="Plunkett G. III"/>
            <person name="Burland V."/>
            <person name="Mau B."/>
            <person name="Glasner J.D."/>
            <person name="Rose D.J."/>
            <person name="Mayhew G.F."/>
            <person name="Evans P.S."/>
            <person name="Gregor J."/>
            <person name="Kirkpatrick H.A."/>
            <person name="Posfai G."/>
            <person name="Hackett J."/>
            <person name="Klink S."/>
            <person name="Boutin A."/>
            <person name="Shao Y."/>
            <person name="Miller L."/>
            <person name="Grotbeck E.J."/>
            <person name="Davis N.W."/>
            <person name="Lim A."/>
            <person name="Dimalanta E.T."/>
            <person name="Potamousis K."/>
            <person name="Apodaca J."/>
            <person name="Anantharaman T.S."/>
            <person name="Lin J."/>
            <person name="Yen G."/>
            <person name="Schwartz D.C."/>
            <person name="Welch R.A."/>
            <person name="Blattner F.R."/>
        </authorList>
    </citation>
    <scope>NUCLEOTIDE SEQUENCE [LARGE SCALE GENOMIC DNA]</scope>
    <source>
        <strain>O157:H7 / EDL933 / ATCC 700927 / EHEC</strain>
    </source>
</reference>
<reference key="2">
    <citation type="journal article" date="2001" name="DNA Res.">
        <title>Complete genome sequence of enterohemorrhagic Escherichia coli O157:H7 and genomic comparison with a laboratory strain K-12.</title>
        <authorList>
            <person name="Hayashi T."/>
            <person name="Makino K."/>
            <person name="Ohnishi M."/>
            <person name="Kurokawa K."/>
            <person name="Ishii K."/>
            <person name="Yokoyama K."/>
            <person name="Han C.-G."/>
            <person name="Ohtsubo E."/>
            <person name="Nakayama K."/>
            <person name="Murata T."/>
            <person name="Tanaka M."/>
            <person name="Tobe T."/>
            <person name="Iida T."/>
            <person name="Takami H."/>
            <person name="Honda T."/>
            <person name="Sasakawa C."/>
            <person name="Ogasawara N."/>
            <person name="Yasunaga T."/>
            <person name="Kuhara S."/>
            <person name="Shiba T."/>
            <person name="Hattori M."/>
            <person name="Shinagawa H."/>
        </authorList>
    </citation>
    <scope>NUCLEOTIDE SEQUENCE [LARGE SCALE GENOMIC DNA]</scope>
    <source>
        <strain>O157:H7 / Sakai / RIMD 0509952 / EHEC</strain>
    </source>
</reference>
<gene>
    <name evidence="2" type="primary">rplF</name>
    <name type="ordered locus">Z4675</name>
    <name type="ordered locus">ECs4170</name>
</gene>
<name>RL6_ECO57</name>
<feature type="initiator methionine" description="Removed" evidence="1">
    <location>
        <position position="1"/>
    </location>
</feature>
<feature type="chain" id="PRO_0000131049" description="Large ribosomal subunit protein uL6">
    <location>
        <begin position="2"/>
        <end position="177"/>
    </location>
</feature>
<feature type="modified residue" description="N6-acetyllysine" evidence="2">
    <location>
        <position position="44"/>
    </location>
</feature>
<dbReference type="EMBL" id="AE005174">
    <property type="protein sequence ID" value="AAG58426.1"/>
    <property type="molecule type" value="Genomic_DNA"/>
</dbReference>
<dbReference type="EMBL" id="BA000007">
    <property type="protein sequence ID" value="BAB37593.1"/>
    <property type="molecule type" value="Genomic_DNA"/>
</dbReference>
<dbReference type="PIR" id="B91150">
    <property type="entry name" value="B91150"/>
</dbReference>
<dbReference type="PIR" id="F85995">
    <property type="entry name" value="F85995"/>
</dbReference>
<dbReference type="RefSeq" id="NP_312197.1">
    <property type="nucleotide sequence ID" value="NC_002695.1"/>
</dbReference>
<dbReference type="RefSeq" id="WP_000091945.1">
    <property type="nucleotide sequence ID" value="NZ_VOAI01000041.1"/>
</dbReference>
<dbReference type="SMR" id="P0AG57"/>
<dbReference type="STRING" id="155864.Z4675"/>
<dbReference type="GeneID" id="86948169"/>
<dbReference type="GeneID" id="915978"/>
<dbReference type="KEGG" id="ece:Z4675"/>
<dbReference type="KEGG" id="ecs:ECs_4170"/>
<dbReference type="PATRIC" id="fig|386585.9.peg.4353"/>
<dbReference type="eggNOG" id="COG0097">
    <property type="taxonomic scope" value="Bacteria"/>
</dbReference>
<dbReference type="HOGENOM" id="CLU_065464_1_2_6"/>
<dbReference type="OMA" id="RERHGLC"/>
<dbReference type="Proteomes" id="UP000000558">
    <property type="component" value="Chromosome"/>
</dbReference>
<dbReference type="Proteomes" id="UP000002519">
    <property type="component" value="Chromosome"/>
</dbReference>
<dbReference type="GO" id="GO:0022625">
    <property type="term" value="C:cytosolic large ribosomal subunit"/>
    <property type="evidence" value="ECO:0007669"/>
    <property type="project" value="TreeGrafter"/>
</dbReference>
<dbReference type="GO" id="GO:0019843">
    <property type="term" value="F:rRNA binding"/>
    <property type="evidence" value="ECO:0007669"/>
    <property type="project" value="UniProtKB-UniRule"/>
</dbReference>
<dbReference type="GO" id="GO:0003735">
    <property type="term" value="F:structural constituent of ribosome"/>
    <property type="evidence" value="ECO:0007669"/>
    <property type="project" value="InterPro"/>
</dbReference>
<dbReference type="GO" id="GO:0002181">
    <property type="term" value="P:cytoplasmic translation"/>
    <property type="evidence" value="ECO:0007669"/>
    <property type="project" value="TreeGrafter"/>
</dbReference>
<dbReference type="FunFam" id="3.90.930.12:FF:000001">
    <property type="entry name" value="50S ribosomal protein L6"/>
    <property type="match status" value="1"/>
</dbReference>
<dbReference type="FunFam" id="3.90.930.12:FF:000002">
    <property type="entry name" value="50S ribosomal protein L6"/>
    <property type="match status" value="1"/>
</dbReference>
<dbReference type="Gene3D" id="3.90.930.12">
    <property type="entry name" value="Ribosomal protein L6, alpha-beta domain"/>
    <property type="match status" value="2"/>
</dbReference>
<dbReference type="HAMAP" id="MF_01365_B">
    <property type="entry name" value="Ribosomal_uL6_B"/>
    <property type="match status" value="1"/>
</dbReference>
<dbReference type="InterPro" id="IPR000702">
    <property type="entry name" value="Ribosomal_uL6-like"/>
</dbReference>
<dbReference type="InterPro" id="IPR036789">
    <property type="entry name" value="Ribosomal_uL6-like_a/b-dom_sf"/>
</dbReference>
<dbReference type="InterPro" id="IPR020040">
    <property type="entry name" value="Ribosomal_uL6_a/b-dom"/>
</dbReference>
<dbReference type="InterPro" id="IPR019906">
    <property type="entry name" value="Ribosomal_uL6_bac-type"/>
</dbReference>
<dbReference type="InterPro" id="IPR002358">
    <property type="entry name" value="Ribosomal_uL6_CS"/>
</dbReference>
<dbReference type="NCBIfam" id="TIGR03654">
    <property type="entry name" value="L6_bact"/>
    <property type="match status" value="1"/>
</dbReference>
<dbReference type="PANTHER" id="PTHR11655">
    <property type="entry name" value="60S/50S RIBOSOMAL PROTEIN L6/L9"/>
    <property type="match status" value="1"/>
</dbReference>
<dbReference type="PANTHER" id="PTHR11655:SF14">
    <property type="entry name" value="LARGE RIBOSOMAL SUBUNIT PROTEIN UL6M"/>
    <property type="match status" value="1"/>
</dbReference>
<dbReference type="Pfam" id="PF00347">
    <property type="entry name" value="Ribosomal_L6"/>
    <property type="match status" value="2"/>
</dbReference>
<dbReference type="PIRSF" id="PIRSF002162">
    <property type="entry name" value="Ribosomal_L6"/>
    <property type="match status" value="1"/>
</dbReference>
<dbReference type="PRINTS" id="PR00059">
    <property type="entry name" value="RIBOSOMALL6"/>
</dbReference>
<dbReference type="SUPFAM" id="SSF56053">
    <property type="entry name" value="Ribosomal protein L6"/>
    <property type="match status" value="2"/>
</dbReference>
<dbReference type="PROSITE" id="PS00525">
    <property type="entry name" value="RIBOSOMAL_L6_1"/>
    <property type="match status" value="1"/>
</dbReference>
<protein>
    <recommendedName>
        <fullName evidence="2">Large ribosomal subunit protein uL6</fullName>
    </recommendedName>
    <alternativeName>
        <fullName evidence="3">50S ribosomal protein L6</fullName>
    </alternativeName>
</protein>
<comment type="function">
    <text evidence="2">This protein binds to the 23S rRNA, and is important in its secondary structure. It is located near the subunit interface in the base of the L7/L12 stalk, and near the tRNA binding site of the peptidyltransferase center.</text>
</comment>
<comment type="subunit">
    <text evidence="2">Part of the 50S ribosomal subunit.</text>
</comment>
<comment type="similarity">
    <text evidence="2">Belongs to the universal ribosomal protein uL6 family.</text>
</comment>
<keyword id="KW-0007">Acetylation</keyword>
<keyword id="KW-1185">Reference proteome</keyword>
<keyword id="KW-0687">Ribonucleoprotein</keyword>
<keyword id="KW-0689">Ribosomal protein</keyword>
<keyword id="KW-0694">RNA-binding</keyword>
<keyword id="KW-0699">rRNA-binding</keyword>
<proteinExistence type="inferred from homology"/>
<evidence type="ECO:0000250" key="1"/>
<evidence type="ECO:0000255" key="2">
    <source>
        <dbReference type="HAMAP-Rule" id="MF_01365"/>
    </source>
</evidence>
<evidence type="ECO:0000305" key="3"/>
<organism>
    <name type="scientific">Escherichia coli O157:H7</name>
    <dbReference type="NCBI Taxonomy" id="83334"/>
    <lineage>
        <taxon>Bacteria</taxon>
        <taxon>Pseudomonadati</taxon>
        <taxon>Pseudomonadota</taxon>
        <taxon>Gammaproteobacteria</taxon>
        <taxon>Enterobacterales</taxon>
        <taxon>Enterobacteriaceae</taxon>
        <taxon>Escherichia</taxon>
    </lineage>
</organism>
<accession>P0AG57</accession>
<accession>P02390</accession>